<accession>Q04S02</accession>
<sequence length="96" mass="10548">MASIKPLGDRVLVEPRQEAEEKIGSIFVPDTAKEKPQEGKVVEIGSGKYEDGKLVPLEVKVGDTVLYGKYSGTEIKSEGKEYLIIRESDILAVVKK</sequence>
<comment type="function">
    <text evidence="1">Together with the chaperonin GroEL, plays an essential role in assisting protein folding. The GroEL-GroES system forms a nano-cage that allows encapsulation of the non-native substrate proteins and provides a physical environment optimized to promote and accelerate protein folding. GroES binds to the apical surface of the GroEL ring, thereby capping the opening of the GroEL channel.</text>
</comment>
<comment type="subunit">
    <text evidence="1">Heptamer of 7 subunits arranged in a ring. Interacts with the chaperonin GroEL.</text>
</comment>
<comment type="subcellular location">
    <subcellularLocation>
        <location evidence="1">Cytoplasm</location>
    </subcellularLocation>
</comment>
<comment type="similarity">
    <text evidence="1">Belongs to the GroES chaperonin family.</text>
</comment>
<organism>
    <name type="scientific">Leptospira borgpetersenii serovar Hardjo-bovis (strain JB197)</name>
    <dbReference type="NCBI Taxonomy" id="355277"/>
    <lineage>
        <taxon>Bacteria</taxon>
        <taxon>Pseudomonadati</taxon>
        <taxon>Spirochaetota</taxon>
        <taxon>Spirochaetia</taxon>
        <taxon>Leptospirales</taxon>
        <taxon>Leptospiraceae</taxon>
        <taxon>Leptospira</taxon>
    </lineage>
</organism>
<evidence type="ECO:0000255" key="1">
    <source>
        <dbReference type="HAMAP-Rule" id="MF_00580"/>
    </source>
</evidence>
<gene>
    <name evidence="1" type="primary">groES</name>
    <name evidence="1" type="synonym">groS</name>
    <name type="ordered locus">LBJ_1771</name>
</gene>
<protein>
    <recommendedName>
        <fullName evidence="1">Co-chaperonin GroES</fullName>
    </recommendedName>
    <alternativeName>
        <fullName evidence="1">10 kDa chaperonin</fullName>
    </alternativeName>
    <alternativeName>
        <fullName evidence="1">Chaperonin-10</fullName>
        <shortName evidence="1">Cpn10</shortName>
    </alternativeName>
</protein>
<keyword id="KW-0143">Chaperone</keyword>
<keyword id="KW-0963">Cytoplasm</keyword>
<reference key="1">
    <citation type="journal article" date="2006" name="Proc. Natl. Acad. Sci. U.S.A.">
        <title>Genome reduction in Leptospira borgpetersenii reflects limited transmission potential.</title>
        <authorList>
            <person name="Bulach D.M."/>
            <person name="Zuerner R.L."/>
            <person name="Wilson P."/>
            <person name="Seemann T."/>
            <person name="McGrath A."/>
            <person name="Cullen P.A."/>
            <person name="Davis J."/>
            <person name="Johnson M."/>
            <person name="Kuczek E."/>
            <person name="Alt D.P."/>
            <person name="Peterson-Burch B."/>
            <person name="Coppel R.L."/>
            <person name="Rood J.I."/>
            <person name="Davies J.K."/>
            <person name="Adler B."/>
        </authorList>
    </citation>
    <scope>NUCLEOTIDE SEQUENCE [LARGE SCALE GENOMIC DNA]</scope>
    <source>
        <strain>JB197</strain>
    </source>
</reference>
<name>CH10_LEPBJ</name>
<dbReference type="EMBL" id="CP000350">
    <property type="protein sequence ID" value="ABJ76318.1"/>
    <property type="molecule type" value="Genomic_DNA"/>
</dbReference>
<dbReference type="RefSeq" id="WP_002619721.1">
    <property type="nucleotide sequence ID" value="NC_008510.1"/>
</dbReference>
<dbReference type="SMR" id="Q04S02"/>
<dbReference type="GeneID" id="61173743"/>
<dbReference type="KEGG" id="lbj:LBJ_1771"/>
<dbReference type="HOGENOM" id="CLU_132825_2_0_12"/>
<dbReference type="Proteomes" id="UP000000656">
    <property type="component" value="Chromosome 1"/>
</dbReference>
<dbReference type="GO" id="GO:0005737">
    <property type="term" value="C:cytoplasm"/>
    <property type="evidence" value="ECO:0007669"/>
    <property type="project" value="UniProtKB-SubCell"/>
</dbReference>
<dbReference type="GO" id="GO:0005524">
    <property type="term" value="F:ATP binding"/>
    <property type="evidence" value="ECO:0007669"/>
    <property type="project" value="InterPro"/>
</dbReference>
<dbReference type="GO" id="GO:0046872">
    <property type="term" value="F:metal ion binding"/>
    <property type="evidence" value="ECO:0007669"/>
    <property type="project" value="TreeGrafter"/>
</dbReference>
<dbReference type="GO" id="GO:0044183">
    <property type="term" value="F:protein folding chaperone"/>
    <property type="evidence" value="ECO:0007669"/>
    <property type="project" value="InterPro"/>
</dbReference>
<dbReference type="GO" id="GO:0051087">
    <property type="term" value="F:protein-folding chaperone binding"/>
    <property type="evidence" value="ECO:0007669"/>
    <property type="project" value="TreeGrafter"/>
</dbReference>
<dbReference type="GO" id="GO:0051082">
    <property type="term" value="F:unfolded protein binding"/>
    <property type="evidence" value="ECO:0007669"/>
    <property type="project" value="TreeGrafter"/>
</dbReference>
<dbReference type="GO" id="GO:0051085">
    <property type="term" value="P:chaperone cofactor-dependent protein refolding"/>
    <property type="evidence" value="ECO:0007669"/>
    <property type="project" value="TreeGrafter"/>
</dbReference>
<dbReference type="CDD" id="cd00320">
    <property type="entry name" value="cpn10"/>
    <property type="match status" value="1"/>
</dbReference>
<dbReference type="FunFam" id="2.30.33.40:FF:000001">
    <property type="entry name" value="10 kDa chaperonin"/>
    <property type="match status" value="1"/>
</dbReference>
<dbReference type="Gene3D" id="2.30.33.40">
    <property type="entry name" value="GroES chaperonin"/>
    <property type="match status" value="1"/>
</dbReference>
<dbReference type="HAMAP" id="MF_00580">
    <property type="entry name" value="CH10"/>
    <property type="match status" value="1"/>
</dbReference>
<dbReference type="InterPro" id="IPR020818">
    <property type="entry name" value="Chaperonin_GroES"/>
</dbReference>
<dbReference type="InterPro" id="IPR037124">
    <property type="entry name" value="Chaperonin_GroES_sf"/>
</dbReference>
<dbReference type="InterPro" id="IPR018369">
    <property type="entry name" value="Chaprnonin_Cpn10_CS"/>
</dbReference>
<dbReference type="InterPro" id="IPR011032">
    <property type="entry name" value="GroES-like_sf"/>
</dbReference>
<dbReference type="NCBIfam" id="NF001531">
    <property type="entry name" value="PRK00364.2-2"/>
    <property type="match status" value="1"/>
</dbReference>
<dbReference type="NCBIfam" id="NF001533">
    <property type="entry name" value="PRK00364.2-4"/>
    <property type="match status" value="1"/>
</dbReference>
<dbReference type="NCBIfam" id="NF001534">
    <property type="entry name" value="PRK00364.2-5"/>
    <property type="match status" value="1"/>
</dbReference>
<dbReference type="PANTHER" id="PTHR10772">
    <property type="entry name" value="10 KDA HEAT SHOCK PROTEIN"/>
    <property type="match status" value="1"/>
</dbReference>
<dbReference type="PANTHER" id="PTHR10772:SF58">
    <property type="entry name" value="CO-CHAPERONIN GROES"/>
    <property type="match status" value="1"/>
</dbReference>
<dbReference type="Pfam" id="PF00166">
    <property type="entry name" value="Cpn10"/>
    <property type="match status" value="1"/>
</dbReference>
<dbReference type="PRINTS" id="PR00297">
    <property type="entry name" value="CHAPERONIN10"/>
</dbReference>
<dbReference type="SMART" id="SM00883">
    <property type="entry name" value="Cpn10"/>
    <property type="match status" value="1"/>
</dbReference>
<dbReference type="SUPFAM" id="SSF50129">
    <property type="entry name" value="GroES-like"/>
    <property type="match status" value="1"/>
</dbReference>
<dbReference type="PROSITE" id="PS00681">
    <property type="entry name" value="CHAPERONINS_CPN10"/>
    <property type="match status" value="1"/>
</dbReference>
<feature type="chain" id="PRO_1000025293" description="Co-chaperonin GroES">
    <location>
        <begin position="1"/>
        <end position="96"/>
    </location>
</feature>
<proteinExistence type="inferred from homology"/>